<dbReference type="EC" id="3.4.21.-" evidence="3"/>
<dbReference type="EMBL" id="AF198031">
    <property type="protein sequence ID" value="AAF85937.1"/>
    <property type="molecule type" value="Genomic_DNA"/>
</dbReference>
<dbReference type="EMBL" id="AF019979">
    <property type="protein sequence ID" value="AAC98894.1"/>
    <property type="molecule type" value="mRNA"/>
</dbReference>
<dbReference type="EMBL" id="AC134858">
    <property type="status" value="NOT_ANNOTATED_CDS"/>
    <property type="molecule type" value="Genomic_DNA"/>
</dbReference>
<dbReference type="EMBL" id="CH466603">
    <property type="protein sequence ID" value="EDL22687.1"/>
    <property type="molecule type" value="Genomic_DNA"/>
</dbReference>
<dbReference type="EMBL" id="BC100716">
    <property type="protein sequence ID" value="AAI00717.1"/>
    <property type="molecule type" value="mRNA"/>
</dbReference>
<dbReference type="EMBL" id="BC100717">
    <property type="protein sequence ID" value="AAI00718.1"/>
    <property type="molecule type" value="mRNA"/>
</dbReference>
<dbReference type="EMBL" id="BC100718">
    <property type="protein sequence ID" value="AAI00719.1"/>
    <property type="molecule type" value="mRNA"/>
</dbReference>
<dbReference type="EMBL" id="BC100719">
    <property type="protein sequence ID" value="AAI00720.1"/>
    <property type="molecule type" value="mRNA"/>
</dbReference>
<dbReference type="CCDS" id="CCDS21186.1"/>
<dbReference type="RefSeq" id="NP_064312.1">
    <property type="nucleotide sequence ID" value="NM_019928.2"/>
</dbReference>
<dbReference type="SMR" id="Q9Z0M1"/>
<dbReference type="FunCoup" id="Q9Z0M1">
    <property type="interactions" value="40"/>
</dbReference>
<dbReference type="STRING" id="10090.ENSMUSP00000007161"/>
<dbReference type="MEROPS" id="S01.251"/>
<dbReference type="GlyCosmos" id="Q9Z0M1">
    <property type="glycosylation" value="2 sites, No reported glycans"/>
</dbReference>
<dbReference type="GlyGen" id="Q9Z0M1">
    <property type="glycosylation" value="5 sites, 1 O-linked glycan (1 site)"/>
</dbReference>
<dbReference type="iPTMnet" id="Q9Z0M1"/>
<dbReference type="PhosphoSitePlus" id="Q9Z0M1"/>
<dbReference type="PaxDb" id="10090-ENSMUSP00000007161"/>
<dbReference type="ProteomicsDB" id="264852"/>
<dbReference type="Antibodypedia" id="18932">
    <property type="antibodies" value="292 antibodies from 35 providers"/>
</dbReference>
<dbReference type="DNASU" id="56640"/>
<dbReference type="Ensembl" id="ENSMUST00000007161.8">
    <property type="protein sequence ID" value="ENSMUSP00000007161.6"/>
    <property type="gene ID" value="ENSMUSG00000006948.8"/>
</dbReference>
<dbReference type="GeneID" id="56640"/>
<dbReference type="KEGG" id="mmu:56640"/>
<dbReference type="UCSC" id="uc009gny.1">
    <property type="organism name" value="mouse"/>
</dbReference>
<dbReference type="AGR" id="MGI:1861379"/>
<dbReference type="CTD" id="9622"/>
<dbReference type="MGI" id="MGI:1861379">
    <property type="gene designation" value="Klk4"/>
</dbReference>
<dbReference type="VEuPathDB" id="HostDB:ENSMUSG00000006948"/>
<dbReference type="eggNOG" id="KOG3627">
    <property type="taxonomic scope" value="Eukaryota"/>
</dbReference>
<dbReference type="GeneTree" id="ENSGT01020000230389"/>
<dbReference type="HOGENOM" id="CLU_006842_1_1_1"/>
<dbReference type="InParanoid" id="Q9Z0M1"/>
<dbReference type="OMA" id="CKFTNWI"/>
<dbReference type="OrthoDB" id="6755574at2759"/>
<dbReference type="PhylomeDB" id="Q9Z0M1"/>
<dbReference type="TreeFam" id="TF331065"/>
<dbReference type="BRENDA" id="3.4.21.B12">
    <property type="organism ID" value="3474"/>
</dbReference>
<dbReference type="BioGRID-ORCS" id="56640">
    <property type="hits" value="2 hits in 80 CRISPR screens"/>
</dbReference>
<dbReference type="PRO" id="PR:Q9Z0M1"/>
<dbReference type="Proteomes" id="UP000000589">
    <property type="component" value="Chromosome 7"/>
</dbReference>
<dbReference type="RNAct" id="Q9Z0M1">
    <property type="molecule type" value="protein"/>
</dbReference>
<dbReference type="Bgee" id="ENSMUSG00000006948">
    <property type="expression patterns" value="Expressed in molar tooth and 18 other cell types or tissues"/>
</dbReference>
<dbReference type="ExpressionAtlas" id="Q9Z0M1">
    <property type="expression patterns" value="baseline and differential"/>
</dbReference>
<dbReference type="GO" id="GO:0005576">
    <property type="term" value="C:extracellular region"/>
    <property type="evidence" value="ECO:0007669"/>
    <property type="project" value="UniProtKB-SubCell"/>
</dbReference>
<dbReference type="GO" id="GO:0046872">
    <property type="term" value="F:metal ion binding"/>
    <property type="evidence" value="ECO:0007669"/>
    <property type="project" value="UniProtKB-KW"/>
</dbReference>
<dbReference type="GO" id="GO:0004252">
    <property type="term" value="F:serine-type endopeptidase activity"/>
    <property type="evidence" value="ECO:0007669"/>
    <property type="project" value="InterPro"/>
</dbReference>
<dbReference type="GO" id="GO:0097186">
    <property type="term" value="P:amelogenesis"/>
    <property type="evidence" value="ECO:0000315"/>
    <property type="project" value="MGI"/>
</dbReference>
<dbReference type="GO" id="GO:0031214">
    <property type="term" value="P:biomineral tissue development"/>
    <property type="evidence" value="ECO:0007669"/>
    <property type="project" value="UniProtKB-KW"/>
</dbReference>
<dbReference type="GO" id="GO:0022617">
    <property type="term" value="P:extracellular matrix disassembly"/>
    <property type="evidence" value="ECO:0000315"/>
    <property type="project" value="MGI"/>
</dbReference>
<dbReference type="GO" id="GO:0030163">
    <property type="term" value="P:protein catabolic process"/>
    <property type="evidence" value="ECO:0000315"/>
    <property type="project" value="MGI"/>
</dbReference>
<dbReference type="GO" id="GO:0006508">
    <property type="term" value="P:proteolysis"/>
    <property type="evidence" value="ECO:0007669"/>
    <property type="project" value="UniProtKB-KW"/>
</dbReference>
<dbReference type="CDD" id="cd00190">
    <property type="entry name" value="Tryp_SPc"/>
    <property type="match status" value="1"/>
</dbReference>
<dbReference type="FunFam" id="2.40.10.10:FF:000091">
    <property type="entry name" value="Kallikrein-4"/>
    <property type="match status" value="1"/>
</dbReference>
<dbReference type="FunFam" id="2.40.10.10:FF:000100">
    <property type="entry name" value="Kallikrein-4"/>
    <property type="match status" value="1"/>
</dbReference>
<dbReference type="Gene3D" id="2.40.10.10">
    <property type="entry name" value="Trypsin-like serine proteases"/>
    <property type="match status" value="2"/>
</dbReference>
<dbReference type="InterPro" id="IPR009003">
    <property type="entry name" value="Peptidase_S1_PA"/>
</dbReference>
<dbReference type="InterPro" id="IPR043504">
    <property type="entry name" value="Peptidase_S1_PA_chymotrypsin"/>
</dbReference>
<dbReference type="InterPro" id="IPR001314">
    <property type="entry name" value="Peptidase_S1A"/>
</dbReference>
<dbReference type="InterPro" id="IPR001254">
    <property type="entry name" value="Trypsin_dom"/>
</dbReference>
<dbReference type="InterPro" id="IPR018114">
    <property type="entry name" value="TRYPSIN_HIS"/>
</dbReference>
<dbReference type="InterPro" id="IPR033116">
    <property type="entry name" value="TRYPSIN_SER"/>
</dbReference>
<dbReference type="PANTHER" id="PTHR24271:SF65">
    <property type="entry name" value="KALLIKREIN-4"/>
    <property type="match status" value="1"/>
</dbReference>
<dbReference type="PANTHER" id="PTHR24271">
    <property type="entry name" value="KALLIKREIN-RELATED"/>
    <property type="match status" value="1"/>
</dbReference>
<dbReference type="Pfam" id="PF00089">
    <property type="entry name" value="Trypsin"/>
    <property type="match status" value="1"/>
</dbReference>
<dbReference type="PRINTS" id="PR00722">
    <property type="entry name" value="CHYMOTRYPSIN"/>
</dbReference>
<dbReference type="SMART" id="SM00020">
    <property type="entry name" value="Tryp_SPc"/>
    <property type="match status" value="1"/>
</dbReference>
<dbReference type="SUPFAM" id="SSF50494">
    <property type="entry name" value="Trypsin-like serine proteases"/>
    <property type="match status" value="1"/>
</dbReference>
<dbReference type="PROSITE" id="PS50240">
    <property type="entry name" value="TRYPSIN_DOM"/>
    <property type="match status" value="1"/>
</dbReference>
<dbReference type="PROSITE" id="PS00134">
    <property type="entry name" value="TRYPSIN_HIS"/>
    <property type="match status" value="1"/>
</dbReference>
<dbReference type="PROSITE" id="PS00135">
    <property type="entry name" value="TRYPSIN_SER"/>
    <property type="match status" value="1"/>
</dbReference>
<organism>
    <name type="scientific">Mus musculus</name>
    <name type="common">Mouse</name>
    <dbReference type="NCBI Taxonomy" id="10090"/>
    <lineage>
        <taxon>Eukaryota</taxon>
        <taxon>Metazoa</taxon>
        <taxon>Chordata</taxon>
        <taxon>Craniata</taxon>
        <taxon>Vertebrata</taxon>
        <taxon>Euteleostomi</taxon>
        <taxon>Mammalia</taxon>
        <taxon>Eutheria</taxon>
        <taxon>Euarchontoglires</taxon>
        <taxon>Glires</taxon>
        <taxon>Rodentia</taxon>
        <taxon>Myomorpha</taxon>
        <taxon>Muroidea</taxon>
        <taxon>Muridae</taxon>
        <taxon>Murinae</taxon>
        <taxon>Mus</taxon>
        <taxon>Mus</taxon>
    </lineage>
</organism>
<reference evidence="13" key="1">
    <citation type="journal article" date="2000" name="Gene">
        <title>Characterization of the mouse and human PRSS17 genes, their relationship to other serine proteases, and the expression of PRSS17 in developing mouse incisors.</title>
        <authorList>
            <person name="Hu J.C.-C."/>
            <person name="Zhang C."/>
            <person name="Sun X."/>
            <person name="Yang Y."/>
            <person name="Cao X."/>
            <person name="Ryu O."/>
            <person name="Simmer J.P."/>
        </authorList>
    </citation>
    <scope>NUCLEOTIDE SEQUENCE [GENOMIC DNA]</scope>
    <scope>DEVELOPMENTAL STAGE</scope>
    <source>
        <strain evidence="13">129/SvJ</strain>
    </source>
</reference>
<reference evidence="12" key="2">
    <citation type="journal article" date="2000" name="J. Dent. Res.">
        <title>Localization of EMSP1 expression during tooth formation and cloning of mouse cDNA.</title>
        <authorList>
            <person name="Hu J.C.-C."/>
            <person name="Ryu O.H."/>
            <person name="Chen J.J."/>
            <person name="Uchida T."/>
            <person name="Wakida K."/>
            <person name="Murakami C."/>
            <person name="Jiang H."/>
            <person name="Qian Q."/>
            <person name="Zhang C."/>
            <person name="Ottmers V."/>
            <person name="Bartlett J.D."/>
            <person name="Simmer J.P."/>
        </authorList>
    </citation>
    <scope>NUCLEOTIDE SEQUENCE [MRNA]</scope>
    <scope>DEVELOPMENTAL STAGE</scope>
    <source>
        <strain evidence="12">Swiss Webster</strain>
        <tissue evidence="12">Ameloblast</tissue>
    </source>
</reference>
<reference evidence="16" key="3">
    <citation type="journal article" date="2009" name="PLoS Biol.">
        <title>Lineage-specific biology revealed by a finished genome assembly of the mouse.</title>
        <authorList>
            <person name="Church D.M."/>
            <person name="Goodstadt L."/>
            <person name="Hillier L.W."/>
            <person name="Zody M.C."/>
            <person name="Goldstein S."/>
            <person name="She X."/>
            <person name="Bult C.J."/>
            <person name="Agarwala R."/>
            <person name="Cherry J.L."/>
            <person name="DiCuccio M."/>
            <person name="Hlavina W."/>
            <person name="Kapustin Y."/>
            <person name="Meric P."/>
            <person name="Maglott D."/>
            <person name="Birtle Z."/>
            <person name="Marques A.C."/>
            <person name="Graves T."/>
            <person name="Zhou S."/>
            <person name="Teague B."/>
            <person name="Potamousis K."/>
            <person name="Churas C."/>
            <person name="Place M."/>
            <person name="Herschleb J."/>
            <person name="Runnheim R."/>
            <person name="Forrest D."/>
            <person name="Amos-Landgraf J."/>
            <person name="Schwartz D.C."/>
            <person name="Cheng Z."/>
            <person name="Lindblad-Toh K."/>
            <person name="Eichler E.E."/>
            <person name="Ponting C.P."/>
        </authorList>
    </citation>
    <scope>NUCLEOTIDE SEQUENCE [LARGE SCALE GENOMIC DNA]</scope>
    <source>
        <strain evidence="16">C57BL/6J</strain>
    </source>
</reference>
<reference evidence="16" key="4">
    <citation type="submission" date="2005-07" db="EMBL/GenBank/DDBJ databases">
        <authorList>
            <person name="Mural R.J."/>
            <person name="Adams M.D."/>
            <person name="Myers E.W."/>
            <person name="Smith H.O."/>
            <person name="Venter J.C."/>
        </authorList>
    </citation>
    <scope>NUCLEOTIDE SEQUENCE [LARGE SCALE GENOMIC DNA]</scope>
</reference>
<reference evidence="14" key="5">
    <citation type="journal article" date="2004" name="Genome Res.">
        <title>The status, quality, and expansion of the NIH full-length cDNA project: the Mammalian Gene Collection (MGC).</title>
        <authorList>
            <consortium name="The MGC Project Team"/>
        </authorList>
    </citation>
    <scope>NUCLEOTIDE SEQUENCE [LARGE SCALE MRNA]</scope>
</reference>
<reference evidence="11" key="6">
    <citation type="journal article" date="2009" name="J. Biol. Chem.">
        <title>Hypomaturation enamel defects in Klk4 knockout/LacZ knockin mice.</title>
        <authorList>
            <person name="Simmer J.P."/>
            <person name="Hu Y."/>
            <person name="Lertlam R."/>
            <person name="Yamakoshi Y."/>
            <person name="Hu J.C."/>
        </authorList>
    </citation>
    <scope>FUNCTION</scope>
    <scope>DISRUPTION PHENOTYPE</scope>
    <scope>DEVELOPMENTAL STAGE</scope>
</reference>
<reference evidence="11" key="7">
    <citation type="journal article" date="2011" name="Eur. J. Oral Sci.">
        <title>Characterization of kallikrein-related peptidase 4 glycosylations.</title>
        <authorList>
            <person name="Yamakoshi Y."/>
            <person name="Yamakoshi F."/>
            <person name="Hu J.C."/>
            <person name="Simmer J.P."/>
        </authorList>
    </citation>
    <scope>GLYCOSYLATION</scope>
</reference>
<reference key="8">
    <citation type="journal article" date="2011" name="J. Cell Sci.">
        <title>PERP regulates enamel formation via effects on cell-cell adhesion and gene expression.</title>
        <authorList>
            <person name="Jheon A.H."/>
            <person name="Mostowfi P."/>
            <person name="Snead M.L."/>
            <person name="Ihrie R.A."/>
            <person name="Sone E."/>
            <person name="Pramparo T."/>
            <person name="Attardi L.D."/>
            <person name="Klein O.D."/>
        </authorList>
    </citation>
    <scope>DEVELOPMENTAL STAGE</scope>
</reference>
<comment type="function">
    <text evidence="6">Has a major role in enamel formation. Required during the maturation stage of tooth development for clearance of enamel proteins and normal structural patterning of the crystalline matrix.</text>
</comment>
<comment type="subcellular location">
    <subcellularLocation>
        <location evidence="11">Secreted</location>
    </subcellularLocation>
</comment>
<comment type="developmental stage">
    <text evidence="4 5 6 7">In developing teeth, expressed in ameloblasts during transition and maturation stages (PubMed:10690663, PubMed:10863090, PubMed:19578120). Expressed weakly in odontoblasts (PubMed:10863090). Not detected in odontoblasts (PubMed:19578120). Expressed in first lower molars at birth (PubMed:21285247). Detected in the epithelium surrounding the erupted first molar (PubMed:10690663).</text>
</comment>
<comment type="PTM">
    <text evidence="8">N-glycosylated. The N-glycan structures are of complex diantennary or triantennary type, which may be further modified with up to 2 sialic acid residues.</text>
</comment>
<comment type="disruption phenotype">
    <text evidence="6">Viable and fertile, when reared on a soft diet. Tooth morphology is grossly normal but the enamel surface is fragile and rapidly abraded. Although formation of the enamel layer is initially normal, the crystallites fail to thicken and interlock. The enamel proteins enamelin and amelogenin are not cleared and persist in the matrix during the maturation stage.</text>
</comment>
<comment type="similarity">
    <text evidence="11">Belongs to the peptidase S1 family. Kallikrein subfamily.</text>
</comment>
<protein>
    <recommendedName>
        <fullName evidence="1">Kallikrein-4</fullName>
        <ecNumber evidence="3">3.4.21.-</ecNumber>
    </recommendedName>
    <alternativeName>
        <fullName evidence="9">Enamel matrix serine proteinase 1</fullName>
    </alternativeName>
    <alternativeName>
        <fullName evidence="1">Kallikrein-like protein 1</fullName>
    </alternativeName>
    <alternativeName>
        <fullName evidence="10">Serine protease 17</fullName>
    </alternativeName>
</protein>
<proteinExistence type="evidence at protein level"/>
<name>KLK4_MOUSE</name>
<evidence type="ECO:0000250" key="1">
    <source>
        <dbReference type="UniProtKB" id="Q9Y5K2"/>
    </source>
</evidence>
<evidence type="ECO:0000255" key="2"/>
<evidence type="ECO:0000255" key="3">
    <source>
        <dbReference type="PROSITE-ProRule" id="PRU00274"/>
    </source>
</evidence>
<evidence type="ECO:0000269" key="4">
    <source>
    </source>
</evidence>
<evidence type="ECO:0000269" key="5">
    <source>
    </source>
</evidence>
<evidence type="ECO:0000269" key="6">
    <source>
    </source>
</evidence>
<evidence type="ECO:0000269" key="7">
    <source>
    </source>
</evidence>
<evidence type="ECO:0000269" key="8">
    <source>
    </source>
</evidence>
<evidence type="ECO:0000303" key="9">
    <source>
    </source>
</evidence>
<evidence type="ECO:0000303" key="10">
    <source>
    </source>
</evidence>
<evidence type="ECO:0000305" key="11"/>
<evidence type="ECO:0000312" key="12">
    <source>
        <dbReference type="EMBL" id="AAC98894.1"/>
    </source>
</evidence>
<evidence type="ECO:0000312" key="13">
    <source>
        <dbReference type="EMBL" id="AAF85937.1"/>
    </source>
</evidence>
<evidence type="ECO:0000312" key="14">
    <source>
        <dbReference type="EMBL" id="AAI00717.1"/>
    </source>
</evidence>
<evidence type="ECO:0000312" key="15">
    <source>
        <dbReference type="MGI" id="MGI:1861379"/>
    </source>
</evidence>
<evidence type="ECO:0000312" key="16">
    <source>
        <dbReference type="Proteomes" id="UP000000589"/>
    </source>
</evidence>
<gene>
    <name evidence="15" type="primary">Klk4</name>
    <name evidence="9" type="synonym">EMSP1</name>
    <name evidence="15" type="synonym">KLK-L1</name>
    <name evidence="10" type="synonym">Prss17</name>
</gene>
<sequence>MMVTARTPWGWFLGCLILEVTGASASSVSSRIIQGQDCSPHSQPWQAALFSEDGFFCSGVLVHPQWVLSAAHCLQESYIVGLGLHNLKGSQEPGSRMLEAHLSIQHPNFNDPSFANDLMLIKLNESVIESNTIRSIPVATQCPTPGDTCLVSGWGQLKNGKLPSLLQCVNLSVASEETCRLLYDPVYHLSMFCAGGGQDQKDSCNGDSGGPIVCNRSLQGLVSMGQGKCGQPGIPSVYTNLCKFTNWIQTIIQTN</sequence>
<keyword id="KW-0091">Biomineralization</keyword>
<keyword id="KW-1015">Disulfide bond</keyword>
<keyword id="KW-0325">Glycoprotein</keyword>
<keyword id="KW-0378">Hydrolase</keyword>
<keyword id="KW-0479">Metal-binding</keyword>
<keyword id="KW-0645">Protease</keyword>
<keyword id="KW-1185">Reference proteome</keyword>
<keyword id="KW-0964">Secreted</keyword>
<keyword id="KW-0720">Serine protease</keyword>
<keyword id="KW-0732">Signal</keyword>
<keyword id="KW-0862">Zinc</keyword>
<keyword id="KW-0865">Zymogen</keyword>
<feature type="signal peptide" evidence="2">
    <location>
        <begin position="1"/>
        <end position="25"/>
    </location>
</feature>
<feature type="propeptide" id="PRO_0000436024" evidence="1">
    <location>
        <begin position="26"/>
        <end position="31"/>
    </location>
</feature>
<feature type="chain" id="PRO_5006493980" description="Kallikrein-4" evidence="2">
    <location>
        <begin position="32"/>
        <end position="255"/>
    </location>
</feature>
<feature type="domain" description="Peptidase S1" evidence="3">
    <location>
        <begin position="32"/>
        <end position="253"/>
    </location>
</feature>
<feature type="active site" description="Charge relay system" evidence="3">
    <location>
        <position position="72"/>
    </location>
</feature>
<feature type="active site" description="Charge relay system" evidence="3">
    <location>
        <position position="117"/>
    </location>
</feature>
<feature type="active site" description="Charge relay system" evidence="3">
    <location>
        <position position="208"/>
    </location>
</feature>
<feature type="binding site" evidence="1">
    <location>
        <position position="41"/>
    </location>
    <ligand>
        <name>Zn(2+)</name>
        <dbReference type="ChEBI" id="CHEBI:29105"/>
    </ligand>
</feature>
<feature type="binding site" evidence="1">
    <location>
        <position position="92"/>
    </location>
    <ligand>
        <name>Zn(2+)</name>
        <dbReference type="ChEBI" id="CHEBI:29105"/>
    </ligand>
</feature>
<feature type="glycosylation site" description="N-linked (GlcNAc...) asparagine" evidence="2">
    <location>
        <position position="124"/>
    </location>
</feature>
<feature type="glycosylation site" description="N-linked (GlcNAc...) asparagine" evidence="2">
    <location>
        <position position="170"/>
    </location>
</feature>
<feature type="disulfide bond" evidence="3">
    <location>
        <begin position="57"/>
        <end position="73"/>
    </location>
</feature>
<feature type="disulfide bond" evidence="3">
    <location>
        <begin position="149"/>
        <end position="214"/>
    </location>
</feature>
<feature type="disulfide bond" evidence="3">
    <location>
        <begin position="179"/>
        <end position="193"/>
    </location>
</feature>
<feature type="disulfide bond" evidence="3">
    <location>
        <begin position="204"/>
        <end position="229"/>
    </location>
</feature>
<feature type="sequence conflict" description="In Ref. 1; AAF85937." evidence="11" ref="1">
    <original>C</original>
    <variation>Y</variation>
    <location>
        <position position="15"/>
    </location>
</feature>
<feature type="sequence conflict" description="In Ref. 1; AAF85937." evidence="11" ref="1">
    <original>I</original>
    <variation>T</variation>
    <location>
        <position position="251"/>
    </location>
</feature>
<accession>Q9Z0M1</accession>
<accession>Q9JIS2</accession>